<feature type="chain" id="PRO_0000344515" description="Coiled-coil domain-containing protein 172">
    <location>
        <begin position="1"/>
        <end position="263"/>
    </location>
</feature>
<feature type="coiled-coil region" evidence="2">
    <location>
        <begin position="13"/>
        <end position="191"/>
    </location>
</feature>
<name>CC172_RAT</name>
<gene>
    <name type="primary">Ccdc172</name>
    <name evidence="4" type="synonym">Tekt2bp1</name>
</gene>
<reference key="1">
    <citation type="journal article" date="2004" name="Genome Res.">
        <title>The status, quality, and expansion of the NIH full-length cDNA project: the Mammalian Gene Collection (MGC).</title>
        <authorList>
            <consortium name="The MGC Project Team"/>
        </authorList>
    </citation>
    <scope>NUCLEOTIDE SEQUENCE [LARGE SCALE MRNA]</scope>
    <source>
        <tissue>Testis</tissue>
    </source>
</reference>
<reference key="2">
    <citation type="journal article" date="2014" name="J. Histochem. Cytochem.">
        <title>Molecular cloning and subcellular localization of Tektin2-binding protein 1 (Ccdc 172) in rat spermatozoa.</title>
        <authorList>
            <person name="Yamaguchi A."/>
            <person name="Kaneko T."/>
            <person name="Inai T."/>
            <person name="Iida H."/>
        </authorList>
    </citation>
    <scope>DEVELOPMENTAL STAGE</scope>
    <scope>TISSUE SPECIFICITY</scope>
    <scope>SUBCELLULAR LOCATION</scope>
</reference>
<accession>Q6AXT4</accession>
<comment type="subunit">
    <text evidence="1">May interact with TEKT2.</text>
</comment>
<comment type="subcellular location">
    <subcellularLocation>
        <location evidence="1">Cytoplasm</location>
    </subcellularLocation>
    <subcellularLocation>
        <location evidence="3">Cell projection</location>
        <location evidence="3">Cilium</location>
    </subcellularLocation>
    <text evidence="1 3">In caput spermatozoa, localized in the middle piece, but predominantly concentrated at the mitochondrial sheath of the flagella and to a lesser extent with outer dense fibers (ODF). Colocalized with TEKT2 at the perinuclear region (By similarity).</text>
</comment>
<comment type="tissue specificity">
    <text evidence="3">Detected in spermatozoa (at protein level). Predominantly expressed in testis and in spermatozoa from the caput and corpus epididymis.</text>
</comment>
<comment type="developmental stage">
    <text evidence="3">Increased after 3 weeks of postnatal development.</text>
</comment>
<comment type="similarity">
    <text evidence="5">Belongs to the CCDC172 family.</text>
</comment>
<evidence type="ECO:0000250" key="1">
    <source>
        <dbReference type="UniProtKB" id="Q810N9"/>
    </source>
</evidence>
<evidence type="ECO:0000255" key="2"/>
<evidence type="ECO:0000269" key="3">
    <source>
    </source>
</evidence>
<evidence type="ECO:0000303" key="4">
    <source>
    </source>
</evidence>
<evidence type="ECO:0000305" key="5"/>
<dbReference type="EMBL" id="BC079324">
    <property type="protein sequence ID" value="AAH79324.1"/>
    <property type="molecule type" value="mRNA"/>
</dbReference>
<dbReference type="RefSeq" id="NP_001014191.1">
    <property type="nucleotide sequence ID" value="NM_001014169.2"/>
</dbReference>
<dbReference type="SMR" id="Q6AXT4"/>
<dbReference type="FunCoup" id="Q6AXT4">
    <property type="interactions" value="11"/>
</dbReference>
<dbReference type="STRING" id="10116.ENSRNOP00000071660"/>
<dbReference type="PhosphoSitePlus" id="Q6AXT4"/>
<dbReference type="PaxDb" id="10116-ENSRNOP00000029328"/>
<dbReference type="Ensembl" id="ENSRNOT00000036012.6">
    <property type="protein sequence ID" value="ENSRNOP00000029328.4"/>
    <property type="gene ID" value="ENSRNOG00000017656.7"/>
</dbReference>
<dbReference type="GeneID" id="361776"/>
<dbReference type="KEGG" id="rno:361776"/>
<dbReference type="AGR" id="RGD:1359412"/>
<dbReference type="CTD" id="374355"/>
<dbReference type="RGD" id="1359412">
    <property type="gene designation" value="Ccdc172"/>
</dbReference>
<dbReference type="eggNOG" id="ENOG502RZCX">
    <property type="taxonomic scope" value="Eukaryota"/>
</dbReference>
<dbReference type="GeneTree" id="ENSGT00390000005203"/>
<dbReference type="HOGENOM" id="CLU_094609_0_0_1"/>
<dbReference type="InParanoid" id="Q6AXT4"/>
<dbReference type="PhylomeDB" id="Q6AXT4"/>
<dbReference type="TreeFam" id="TF333231"/>
<dbReference type="PRO" id="PR:Q6AXT4"/>
<dbReference type="Proteomes" id="UP000002494">
    <property type="component" value="Chromosome 1"/>
</dbReference>
<dbReference type="Bgee" id="ENSRNOG00000017656">
    <property type="expression patterns" value="Expressed in testis and 1 other cell type or tissue"/>
</dbReference>
<dbReference type="GO" id="GO:0005737">
    <property type="term" value="C:cytoplasm"/>
    <property type="evidence" value="ECO:0000250"/>
    <property type="project" value="UniProtKB"/>
</dbReference>
<dbReference type="GO" id="GO:0097225">
    <property type="term" value="C:sperm midpiece"/>
    <property type="evidence" value="ECO:0000314"/>
    <property type="project" value="UniProtKB"/>
</dbReference>
<dbReference type="InterPro" id="IPR029618">
    <property type="entry name" value="CCDC172"/>
</dbReference>
<dbReference type="PANTHER" id="PTHR22419">
    <property type="entry name" value="COILED-COIL DOMAIN-CONTAINING PROTEIN 172"/>
    <property type="match status" value="1"/>
</dbReference>
<dbReference type="PANTHER" id="PTHR22419:SF2">
    <property type="entry name" value="COILED-COIL DOMAIN-CONTAINING PROTEIN 172"/>
    <property type="match status" value="1"/>
</dbReference>
<keyword id="KW-0966">Cell projection</keyword>
<keyword id="KW-0175">Coiled coil</keyword>
<keyword id="KW-0963">Cytoplasm</keyword>
<keyword id="KW-1185">Reference proteome</keyword>
<proteinExistence type="evidence at protein level"/>
<sequence length="263" mass="31075">MSLESLFQHIIFTEHQAEESRRVMREVRSEIARCRGKIKKATEDLNEEKIKLESKVQQFSEKTFLLELLKTRENALERQCSAIVSERDRLLQACEAIKKKTTEQEERFIKEITDFNDNYEITKKRDALMEEDIKLEMADLENQAEALRGEMKSMEYNSGQLQELQKLKSELLQELFTLQKKLKVLKDEETEAICITKHLEAEKIKIREKPQHDPECVRRLKRELDLYKEEDMESVCRALQIEVDLLESTLVPKDPQDNNSLSR</sequence>
<protein>
    <recommendedName>
        <fullName>Coiled-coil domain-containing protein 172</fullName>
    </recommendedName>
    <alternativeName>
        <fullName evidence="4">TEKT2-binding protein 1</fullName>
    </alternativeName>
</protein>
<organism>
    <name type="scientific">Rattus norvegicus</name>
    <name type="common">Rat</name>
    <dbReference type="NCBI Taxonomy" id="10116"/>
    <lineage>
        <taxon>Eukaryota</taxon>
        <taxon>Metazoa</taxon>
        <taxon>Chordata</taxon>
        <taxon>Craniata</taxon>
        <taxon>Vertebrata</taxon>
        <taxon>Euteleostomi</taxon>
        <taxon>Mammalia</taxon>
        <taxon>Eutheria</taxon>
        <taxon>Euarchontoglires</taxon>
        <taxon>Glires</taxon>
        <taxon>Rodentia</taxon>
        <taxon>Myomorpha</taxon>
        <taxon>Muroidea</taxon>
        <taxon>Muridae</taxon>
        <taxon>Murinae</taxon>
        <taxon>Rattus</taxon>
    </lineage>
</organism>